<organism>
    <name type="scientific">Staphylococcus epidermidis (strain ATCC 12228 / FDA PCI 1200)</name>
    <dbReference type="NCBI Taxonomy" id="176280"/>
    <lineage>
        <taxon>Bacteria</taxon>
        <taxon>Bacillati</taxon>
        <taxon>Bacillota</taxon>
        <taxon>Bacilli</taxon>
        <taxon>Bacillales</taxon>
        <taxon>Staphylococcaceae</taxon>
        <taxon>Staphylococcus</taxon>
    </lineage>
</organism>
<feature type="chain" id="PRO_0000140384" description="2-isopropylmalate synthase">
    <location>
        <begin position="1"/>
        <end position="511"/>
    </location>
</feature>
<feature type="domain" description="Pyruvate carboxyltransferase" evidence="1">
    <location>
        <begin position="5"/>
        <end position="267"/>
    </location>
</feature>
<feature type="region of interest" description="Regulatory domain" evidence="1">
    <location>
        <begin position="391"/>
        <end position="511"/>
    </location>
</feature>
<feature type="binding site" evidence="1">
    <location>
        <position position="14"/>
    </location>
    <ligand>
        <name>Mn(2+)</name>
        <dbReference type="ChEBI" id="CHEBI:29035"/>
    </ligand>
</feature>
<feature type="binding site" evidence="1">
    <location>
        <position position="202"/>
    </location>
    <ligand>
        <name>Mn(2+)</name>
        <dbReference type="ChEBI" id="CHEBI:29035"/>
    </ligand>
</feature>
<feature type="binding site" evidence="1">
    <location>
        <position position="204"/>
    </location>
    <ligand>
        <name>Mn(2+)</name>
        <dbReference type="ChEBI" id="CHEBI:29035"/>
    </ligand>
</feature>
<feature type="binding site" evidence="1">
    <location>
        <position position="238"/>
    </location>
    <ligand>
        <name>Mn(2+)</name>
        <dbReference type="ChEBI" id="CHEBI:29035"/>
    </ligand>
</feature>
<gene>
    <name evidence="1" type="primary">leuA</name>
    <name type="ordered locus">SE_1658</name>
</gene>
<dbReference type="EC" id="2.3.3.13" evidence="1"/>
<dbReference type="EMBL" id="AE015929">
    <property type="protein sequence ID" value="AAO05257.1"/>
    <property type="molecule type" value="Genomic_DNA"/>
</dbReference>
<dbReference type="RefSeq" id="NP_765213.1">
    <property type="nucleotide sequence ID" value="NC_004461.1"/>
</dbReference>
<dbReference type="RefSeq" id="WP_001830007.1">
    <property type="nucleotide sequence ID" value="NZ_WBME01000022.1"/>
</dbReference>
<dbReference type="SMR" id="Q8CNL3"/>
<dbReference type="KEGG" id="sep:SE_1658"/>
<dbReference type="PATRIC" id="fig|176280.10.peg.1622"/>
<dbReference type="eggNOG" id="COG0119">
    <property type="taxonomic scope" value="Bacteria"/>
</dbReference>
<dbReference type="HOGENOM" id="CLU_022158_0_1_9"/>
<dbReference type="OrthoDB" id="9804858at2"/>
<dbReference type="UniPathway" id="UPA00048">
    <property type="reaction ID" value="UER00070"/>
</dbReference>
<dbReference type="Proteomes" id="UP000001411">
    <property type="component" value="Chromosome"/>
</dbReference>
<dbReference type="GO" id="GO:0005737">
    <property type="term" value="C:cytoplasm"/>
    <property type="evidence" value="ECO:0007669"/>
    <property type="project" value="UniProtKB-SubCell"/>
</dbReference>
<dbReference type="GO" id="GO:0003852">
    <property type="term" value="F:2-isopropylmalate synthase activity"/>
    <property type="evidence" value="ECO:0007669"/>
    <property type="project" value="UniProtKB-UniRule"/>
</dbReference>
<dbReference type="GO" id="GO:0003985">
    <property type="term" value="F:acetyl-CoA C-acetyltransferase activity"/>
    <property type="evidence" value="ECO:0007669"/>
    <property type="project" value="UniProtKB-UniRule"/>
</dbReference>
<dbReference type="GO" id="GO:0030145">
    <property type="term" value="F:manganese ion binding"/>
    <property type="evidence" value="ECO:0007669"/>
    <property type="project" value="UniProtKB-UniRule"/>
</dbReference>
<dbReference type="GO" id="GO:0009098">
    <property type="term" value="P:L-leucine biosynthetic process"/>
    <property type="evidence" value="ECO:0007669"/>
    <property type="project" value="UniProtKB-UniRule"/>
</dbReference>
<dbReference type="CDD" id="cd07940">
    <property type="entry name" value="DRE_TIM_IPMS"/>
    <property type="match status" value="1"/>
</dbReference>
<dbReference type="FunFam" id="1.10.238.260:FF:000001">
    <property type="entry name" value="2-isopropylmalate synthase"/>
    <property type="match status" value="1"/>
</dbReference>
<dbReference type="FunFam" id="3.20.20.70:FF:000010">
    <property type="entry name" value="2-isopropylmalate synthase"/>
    <property type="match status" value="1"/>
</dbReference>
<dbReference type="FunFam" id="3.30.160.270:FF:000003">
    <property type="entry name" value="2-isopropylmalate synthase"/>
    <property type="match status" value="1"/>
</dbReference>
<dbReference type="Gene3D" id="1.10.238.260">
    <property type="match status" value="1"/>
</dbReference>
<dbReference type="Gene3D" id="3.30.160.270">
    <property type="match status" value="1"/>
</dbReference>
<dbReference type="Gene3D" id="3.20.20.70">
    <property type="entry name" value="Aldolase class I"/>
    <property type="match status" value="1"/>
</dbReference>
<dbReference type="HAMAP" id="MF_01025">
    <property type="entry name" value="LeuA_type1"/>
    <property type="match status" value="1"/>
</dbReference>
<dbReference type="InterPro" id="IPR050073">
    <property type="entry name" value="2-IPM_HCS-like"/>
</dbReference>
<dbReference type="InterPro" id="IPR013709">
    <property type="entry name" value="2-isopropylmalate_synth_dimer"/>
</dbReference>
<dbReference type="InterPro" id="IPR002034">
    <property type="entry name" value="AIPM/Hcit_synth_CS"/>
</dbReference>
<dbReference type="InterPro" id="IPR013785">
    <property type="entry name" value="Aldolase_TIM"/>
</dbReference>
<dbReference type="InterPro" id="IPR054691">
    <property type="entry name" value="LeuA/HCS_post-cat"/>
</dbReference>
<dbReference type="InterPro" id="IPR036230">
    <property type="entry name" value="LeuA_allosteric_dom_sf"/>
</dbReference>
<dbReference type="InterPro" id="IPR005671">
    <property type="entry name" value="LeuA_bact_synth"/>
</dbReference>
<dbReference type="InterPro" id="IPR000891">
    <property type="entry name" value="PYR_CT"/>
</dbReference>
<dbReference type="NCBIfam" id="TIGR00973">
    <property type="entry name" value="leuA_bact"/>
    <property type="match status" value="1"/>
</dbReference>
<dbReference type="NCBIfam" id="NF002086">
    <property type="entry name" value="PRK00915.1-3"/>
    <property type="match status" value="1"/>
</dbReference>
<dbReference type="NCBIfam" id="NF002088">
    <property type="entry name" value="PRK00915.1-5"/>
    <property type="match status" value="1"/>
</dbReference>
<dbReference type="PANTHER" id="PTHR10277:SF9">
    <property type="entry name" value="2-ISOPROPYLMALATE SYNTHASE 1, CHLOROPLASTIC-RELATED"/>
    <property type="match status" value="1"/>
</dbReference>
<dbReference type="PANTHER" id="PTHR10277">
    <property type="entry name" value="HOMOCITRATE SYNTHASE-RELATED"/>
    <property type="match status" value="1"/>
</dbReference>
<dbReference type="Pfam" id="PF22617">
    <property type="entry name" value="HCS_D2"/>
    <property type="match status" value="1"/>
</dbReference>
<dbReference type="Pfam" id="PF00682">
    <property type="entry name" value="HMGL-like"/>
    <property type="match status" value="1"/>
</dbReference>
<dbReference type="Pfam" id="PF08502">
    <property type="entry name" value="LeuA_dimer"/>
    <property type="match status" value="1"/>
</dbReference>
<dbReference type="SMART" id="SM00917">
    <property type="entry name" value="LeuA_dimer"/>
    <property type="match status" value="1"/>
</dbReference>
<dbReference type="SUPFAM" id="SSF110921">
    <property type="entry name" value="2-isopropylmalate synthase LeuA, allosteric (dimerisation) domain"/>
    <property type="match status" value="1"/>
</dbReference>
<dbReference type="SUPFAM" id="SSF51569">
    <property type="entry name" value="Aldolase"/>
    <property type="match status" value="1"/>
</dbReference>
<dbReference type="PROSITE" id="PS00816">
    <property type="entry name" value="AIPM_HOMOCIT_SYNTH_2"/>
    <property type="match status" value="1"/>
</dbReference>
<dbReference type="PROSITE" id="PS50991">
    <property type="entry name" value="PYR_CT"/>
    <property type="match status" value="1"/>
</dbReference>
<proteinExistence type="inferred from homology"/>
<comment type="function">
    <text evidence="1">Catalyzes the condensation of the acetyl group of acetyl-CoA with 3-methyl-2-oxobutanoate (2-ketoisovalerate) to form 3-carboxy-3-hydroxy-4-methylpentanoate (2-isopropylmalate).</text>
</comment>
<comment type="catalytic activity">
    <reaction evidence="1">
        <text>3-methyl-2-oxobutanoate + acetyl-CoA + H2O = (2S)-2-isopropylmalate + CoA + H(+)</text>
        <dbReference type="Rhea" id="RHEA:21524"/>
        <dbReference type="ChEBI" id="CHEBI:1178"/>
        <dbReference type="ChEBI" id="CHEBI:11851"/>
        <dbReference type="ChEBI" id="CHEBI:15377"/>
        <dbReference type="ChEBI" id="CHEBI:15378"/>
        <dbReference type="ChEBI" id="CHEBI:57287"/>
        <dbReference type="ChEBI" id="CHEBI:57288"/>
        <dbReference type="EC" id="2.3.3.13"/>
    </reaction>
</comment>
<comment type="cofactor">
    <cofactor evidence="1">
        <name>Mn(2+)</name>
        <dbReference type="ChEBI" id="CHEBI:29035"/>
    </cofactor>
</comment>
<comment type="pathway">
    <text evidence="1">Amino-acid biosynthesis; L-leucine biosynthesis; L-leucine from 3-methyl-2-oxobutanoate: step 1/4.</text>
</comment>
<comment type="subunit">
    <text evidence="1">Homodimer.</text>
</comment>
<comment type="subcellular location">
    <subcellularLocation>
        <location evidence="1">Cytoplasm</location>
    </subcellularLocation>
</comment>
<comment type="similarity">
    <text evidence="1">Belongs to the alpha-IPM synthase/homocitrate synthase family. LeuA type 1 subfamily.</text>
</comment>
<accession>Q8CNL3</accession>
<name>LEU1_STAES</name>
<evidence type="ECO:0000255" key="1">
    <source>
        <dbReference type="HAMAP-Rule" id="MF_01025"/>
    </source>
</evidence>
<protein>
    <recommendedName>
        <fullName evidence="1">2-isopropylmalate synthase</fullName>
        <ecNumber evidence="1">2.3.3.13</ecNumber>
    </recommendedName>
    <alternativeName>
        <fullName evidence="1">Alpha-IPM synthase</fullName>
    </alternativeName>
    <alternativeName>
        <fullName evidence="1">Alpha-isopropylmalate synthase</fullName>
    </alternativeName>
</protein>
<keyword id="KW-0028">Amino-acid biosynthesis</keyword>
<keyword id="KW-0100">Branched-chain amino acid biosynthesis</keyword>
<keyword id="KW-0963">Cytoplasm</keyword>
<keyword id="KW-0432">Leucine biosynthesis</keyword>
<keyword id="KW-0464">Manganese</keyword>
<keyword id="KW-0479">Metal-binding</keyword>
<keyword id="KW-0808">Transferase</keyword>
<sequence>MEEHIQIFDTTLRDGEQTPGVNFTFDERLKIAKQLEKWGVDVLEAGFPASSTGSFKSVEAIAKTLTTTAVCGLARCKKSDIDAVYEATKEAVKPQVHVFIATSPIHLEHKLKMTQDEVLTSIKEHVSYAKQFFEVVQFSPEDATRTEIPFLIECVQTAINAGATIINIPDTVGFSYPTEYGEIFKQLTQAVKSNSKIIFSAHCHDDLGMAVANSLAAIEGGARRIEGTVNGIGERAGNASLEEVALALYVRKDHYGLESQINLEETKKTSDLISRYAGIRVPRNKAIVGQNAFSHESGIHQDGVLKHRETYEIMTPQLVGVNTTELPLGKLSGKHAFAEKLKALGYEIKLEDQVTLFKQFKEIADKKKNVSDRDIHAIIHGSEHEHNAIFQLDNLQLQYVSKGLQSAVVVIKERNGQVKQDSSIGTGSIVAIYNAVDRIFKKDAELIDYRIDSVTEGTDAQAEVHVRIIINHIEVTGIGIDHDILKASCKAYIDAHAKYISEYELKEGIRT</sequence>
<reference key="1">
    <citation type="journal article" date="2003" name="Mol. Microbiol.">
        <title>Genome-based analysis of virulence genes in a non-biofilm-forming Staphylococcus epidermidis strain (ATCC 12228).</title>
        <authorList>
            <person name="Zhang Y.-Q."/>
            <person name="Ren S.-X."/>
            <person name="Li H.-L."/>
            <person name="Wang Y.-X."/>
            <person name="Fu G."/>
            <person name="Yang J."/>
            <person name="Qin Z.-Q."/>
            <person name="Miao Y.-G."/>
            <person name="Wang W.-Y."/>
            <person name="Chen R.-S."/>
            <person name="Shen Y."/>
            <person name="Chen Z."/>
            <person name="Yuan Z.-H."/>
            <person name="Zhao G.-P."/>
            <person name="Qu D."/>
            <person name="Danchin A."/>
            <person name="Wen Y.-M."/>
        </authorList>
    </citation>
    <scope>NUCLEOTIDE SEQUENCE [LARGE SCALE GENOMIC DNA]</scope>
    <source>
        <strain>ATCC 12228 / FDA PCI 1200</strain>
    </source>
</reference>